<evidence type="ECO:0000250" key="1">
    <source>
        <dbReference type="UniProtKB" id="P25808"/>
    </source>
</evidence>
<evidence type="ECO:0000255" key="2"/>
<evidence type="ECO:0000255" key="3">
    <source>
        <dbReference type="PROSITE-ProRule" id="PRU00541"/>
    </source>
</evidence>
<evidence type="ECO:0000255" key="4">
    <source>
        <dbReference type="PROSITE-ProRule" id="PRU00542"/>
    </source>
</evidence>
<evidence type="ECO:0000256" key="5">
    <source>
        <dbReference type="SAM" id="MobiDB-lite"/>
    </source>
</evidence>
<evidence type="ECO:0000305" key="6"/>
<proteinExistence type="inferred from homology"/>
<feature type="chain" id="PRO_0000232329" description="ATP-dependent rRNA helicase SPB4">
    <location>
        <begin position="1"/>
        <end position="637"/>
    </location>
</feature>
<feature type="domain" description="Helicase ATP-binding" evidence="3">
    <location>
        <begin position="45"/>
        <end position="247"/>
    </location>
</feature>
<feature type="domain" description="Helicase C-terminal" evidence="4">
    <location>
        <begin position="283"/>
        <end position="438"/>
    </location>
</feature>
<feature type="region of interest" description="Disordered" evidence="5">
    <location>
        <begin position="535"/>
        <end position="637"/>
    </location>
</feature>
<feature type="coiled-coil region" evidence="2">
    <location>
        <begin position="524"/>
        <end position="631"/>
    </location>
</feature>
<feature type="short sequence motif" description="Q motif" evidence="6">
    <location>
        <begin position="14"/>
        <end position="42"/>
    </location>
</feature>
<feature type="short sequence motif" description="DEAD box" evidence="6">
    <location>
        <begin position="195"/>
        <end position="198"/>
    </location>
</feature>
<feature type="compositionally biased region" description="Basic and acidic residues" evidence="5">
    <location>
        <begin position="535"/>
        <end position="553"/>
    </location>
</feature>
<feature type="compositionally biased region" description="Basic and acidic residues" evidence="5">
    <location>
        <begin position="563"/>
        <end position="576"/>
    </location>
</feature>
<feature type="compositionally biased region" description="Basic and acidic residues" evidence="5">
    <location>
        <begin position="583"/>
        <end position="618"/>
    </location>
</feature>
<feature type="compositionally biased region" description="Basic and acidic residues" evidence="5">
    <location>
        <begin position="625"/>
        <end position="637"/>
    </location>
</feature>
<feature type="binding site" evidence="3">
    <location>
        <begin position="58"/>
        <end position="65"/>
    </location>
    <ligand>
        <name>ATP</name>
        <dbReference type="ChEBI" id="CHEBI:30616"/>
    </ligand>
</feature>
<accession>Q4HVW2</accession>
<accession>A0A0E0SIG5</accession>
<accession>V6RV17</accession>
<dbReference type="EC" id="3.6.4.13" evidence="1"/>
<dbReference type="EMBL" id="DS231670">
    <property type="protein sequence ID" value="ESU17862.1"/>
    <property type="molecule type" value="Genomic_DNA"/>
</dbReference>
<dbReference type="EMBL" id="HG970334">
    <property type="protein sequence ID" value="CEF86228.1"/>
    <property type="molecule type" value="Genomic_DNA"/>
</dbReference>
<dbReference type="RefSeq" id="XP_011325484.1">
    <property type="nucleotide sequence ID" value="XM_011327182.1"/>
</dbReference>
<dbReference type="SMR" id="Q4HVW2"/>
<dbReference type="FunCoup" id="Q4HVW2">
    <property type="interactions" value="1180"/>
</dbReference>
<dbReference type="STRING" id="229533.Q4HVW2"/>
<dbReference type="GeneID" id="23557776"/>
<dbReference type="KEGG" id="fgr:FGSG_10896"/>
<dbReference type="VEuPathDB" id="FungiDB:FGRAMPH1_01G20749"/>
<dbReference type="eggNOG" id="KOG0345">
    <property type="taxonomic scope" value="Eukaryota"/>
</dbReference>
<dbReference type="HOGENOM" id="CLU_003041_26_4_1"/>
<dbReference type="InParanoid" id="Q4HVW2"/>
<dbReference type="OrthoDB" id="92599at110618"/>
<dbReference type="Proteomes" id="UP000070720">
    <property type="component" value="Chromosome 3"/>
</dbReference>
<dbReference type="GO" id="GO:0005730">
    <property type="term" value="C:nucleolus"/>
    <property type="evidence" value="ECO:0007669"/>
    <property type="project" value="UniProtKB-SubCell"/>
</dbReference>
<dbReference type="GO" id="GO:0005524">
    <property type="term" value="F:ATP binding"/>
    <property type="evidence" value="ECO:0007669"/>
    <property type="project" value="UniProtKB-KW"/>
</dbReference>
<dbReference type="GO" id="GO:0016887">
    <property type="term" value="F:ATP hydrolysis activity"/>
    <property type="evidence" value="ECO:0007669"/>
    <property type="project" value="RHEA"/>
</dbReference>
<dbReference type="GO" id="GO:0003723">
    <property type="term" value="F:RNA binding"/>
    <property type="evidence" value="ECO:0007669"/>
    <property type="project" value="UniProtKB-KW"/>
</dbReference>
<dbReference type="GO" id="GO:0003724">
    <property type="term" value="F:RNA helicase activity"/>
    <property type="evidence" value="ECO:0007669"/>
    <property type="project" value="UniProtKB-EC"/>
</dbReference>
<dbReference type="GO" id="GO:0006364">
    <property type="term" value="P:rRNA processing"/>
    <property type="evidence" value="ECO:0007669"/>
    <property type="project" value="UniProtKB-KW"/>
</dbReference>
<dbReference type="CDD" id="cd17960">
    <property type="entry name" value="DEADc_DDX55"/>
    <property type="match status" value="1"/>
</dbReference>
<dbReference type="CDD" id="cd18787">
    <property type="entry name" value="SF2_C_DEAD"/>
    <property type="match status" value="1"/>
</dbReference>
<dbReference type="Gene3D" id="3.40.50.300">
    <property type="entry name" value="P-loop containing nucleotide triphosphate hydrolases"/>
    <property type="match status" value="2"/>
</dbReference>
<dbReference type="InterPro" id="IPR056330">
    <property type="entry name" value="CTT_SPB4"/>
</dbReference>
<dbReference type="InterPro" id="IPR011545">
    <property type="entry name" value="DEAD/DEAH_box_helicase_dom"/>
</dbReference>
<dbReference type="InterPro" id="IPR014001">
    <property type="entry name" value="Helicase_ATP-bd"/>
</dbReference>
<dbReference type="InterPro" id="IPR001650">
    <property type="entry name" value="Helicase_C-like"/>
</dbReference>
<dbReference type="InterPro" id="IPR027417">
    <property type="entry name" value="P-loop_NTPase"/>
</dbReference>
<dbReference type="InterPro" id="IPR000629">
    <property type="entry name" value="RNA-helicase_DEAD-box_CS"/>
</dbReference>
<dbReference type="InterPro" id="IPR014014">
    <property type="entry name" value="RNA_helicase_DEAD_Q_motif"/>
</dbReference>
<dbReference type="InterPro" id="IPR025313">
    <property type="entry name" value="SPB4-like_CTE"/>
</dbReference>
<dbReference type="PANTHER" id="PTHR24031">
    <property type="entry name" value="RNA HELICASE"/>
    <property type="match status" value="1"/>
</dbReference>
<dbReference type="Pfam" id="PF13959">
    <property type="entry name" value="CTE_SPB4"/>
    <property type="match status" value="1"/>
</dbReference>
<dbReference type="Pfam" id="PF23681">
    <property type="entry name" value="CTT_SPB4"/>
    <property type="match status" value="1"/>
</dbReference>
<dbReference type="Pfam" id="PF00270">
    <property type="entry name" value="DEAD"/>
    <property type="match status" value="1"/>
</dbReference>
<dbReference type="Pfam" id="PF00271">
    <property type="entry name" value="Helicase_C"/>
    <property type="match status" value="1"/>
</dbReference>
<dbReference type="SMART" id="SM00487">
    <property type="entry name" value="DEXDc"/>
    <property type="match status" value="1"/>
</dbReference>
<dbReference type="SMART" id="SM01178">
    <property type="entry name" value="DUF4217"/>
    <property type="match status" value="1"/>
</dbReference>
<dbReference type="SMART" id="SM00490">
    <property type="entry name" value="HELICc"/>
    <property type="match status" value="1"/>
</dbReference>
<dbReference type="SUPFAM" id="SSF52540">
    <property type="entry name" value="P-loop containing nucleoside triphosphate hydrolases"/>
    <property type="match status" value="2"/>
</dbReference>
<dbReference type="PROSITE" id="PS00039">
    <property type="entry name" value="DEAD_ATP_HELICASE"/>
    <property type="match status" value="1"/>
</dbReference>
<dbReference type="PROSITE" id="PS51192">
    <property type="entry name" value="HELICASE_ATP_BIND_1"/>
    <property type="match status" value="1"/>
</dbReference>
<dbReference type="PROSITE" id="PS51194">
    <property type="entry name" value="HELICASE_CTER"/>
    <property type="match status" value="1"/>
</dbReference>
<dbReference type="PROSITE" id="PS51195">
    <property type="entry name" value="Q_MOTIF"/>
    <property type="match status" value="1"/>
</dbReference>
<comment type="function">
    <text evidence="1">ATP-binding RNA helicase involved in the biogenesis of 60S ribosomal subunits. Binds 90S pre-ribosomal particles and dissociates from pre-60S ribosomal particles after processing of 27SB pre-rRNA. Required for the normal formation of 18S rRNA through the processing of pre-rRNAs at sites A0, A1 and A2, and the normal formation of 25S and 5.8S rRNAs through the processing of pre-rRNAs at sites C1 and C2.</text>
</comment>
<comment type="catalytic activity">
    <reaction evidence="1">
        <text>ATP + H2O = ADP + phosphate + H(+)</text>
        <dbReference type="Rhea" id="RHEA:13065"/>
        <dbReference type="ChEBI" id="CHEBI:15377"/>
        <dbReference type="ChEBI" id="CHEBI:15378"/>
        <dbReference type="ChEBI" id="CHEBI:30616"/>
        <dbReference type="ChEBI" id="CHEBI:43474"/>
        <dbReference type="ChEBI" id="CHEBI:456216"/>
        <dbReference type="EC" id="3.6.4.13"/>
    </reaction>
</comment>
<comment type="subunit">
    <text evidence="1">Component of pre-60S ribosomal complexes.</text>
</comment>
<comment type="subcellular location">
    <subcellularLocation>
        <location evidence="1">Nucleus</location>
        <location evidence="1">Nucleolus</location>
    </subcellularLocation>
</comment>
<comment type="domain">
    <text>The Q motif is unique to and characteristic of the DEAD box family of RNA helicases and controls ATP binding and hydrolysis.</text>
</comment>
<comment type="similarity">
    <text evidence="6">Belongs to the DEAD box helicase family. DDX55/SPB4 subfamily.</text>
</comment>
<reference key="1">
    <citation type="journal article" date="2007" name="Science">
        <title>The Fusarium graminearum genome reveals a link between localized polymorphism and pathogen specialization.</title>
        <authorList>
            <person name="Cuomo C.A."/>
            <person name="Gueldener U."/>
            <person name="Xu J.-R."/>
            <person name="Trail F."/>
            <person name="Turgeon B.G."/>
            <person name="Di Pietro A."/>
            <person name="Walton J.D."/>
            <person name="Ma L.-J."/>
            <person name="Baker S.E."/>
            <person name="Rep M."/>
            <person name="Adam G."/>
            <person name="Antoniw J."/>
            <person name="Baldwin T."/>
            <person name="Calvo S.E."/>
            <person name="Chang Y.-L."/>
            <person name="DeCaprio D."/>
            <person name="Gale L.R."/>
            <person name="Gnerre S."/>
            <person name="Goswami R.S."/>
            <person name="Hammond-Kosack K."/>
            <person name="Harris L.J."/>
            <person name="Hilburn K."/>
            <person name="Kennell J.C."/>
            <person name="Kroken S."/>
            <person name="Magnuson J.K."/>
            <person name="Mannhaupt G."/>
            <person name="Mauceli E.W."/>
            <person name="Mewes H.-W."/>
            <person name="Mitterbauer R."/>
            <person name="Muehlbauer G."/>
            <person name="Muensterkoetter M."/>
            <person name="Nelson D."/>
            <person name="O'Donnell K."/>
            <person name="Ouellet T."/>
            <person name="Qi W."/>
            <person name="Quesneville H."/>
            <person name="Roncero M.I.G."/>
            <person name="Seong K.-Y."/>
            <person name="Tetko I.V."/>
            <person name="Urban M."/>
            <person name="Waalwijk C."/>
            <person name="Ward T.J."/>
            <person name="Yao J."/>
            <person name="Birren B.W."/>
            <person name="Kistler H.C."/>
        </authorList>
    </citation>
    <scope>NUCLEOTIDE SEQUENCE [LARGE SCALE GENOMIC DNA]</scope>
    <source>
        <strain>ATCC MYA-4620 / CBS 123657 / FGSC 9075 / NRRL 31084 / PH-1</strain>
    </source>
</reference>
<reference key="2">
    <citation type="journal article" date="2010" name="Nature">
        <title>Comparative genomics reveals mobile pathogenicity chromosomes in Fusarium.</title>
        <authorList>
            <person name="Ma L.-J."/>
            <person name="van der Does H.C."/>
            <person name="Borkovich K.A."/>
            <person name="Coleman J.J."/>
            <person name="Daboussi M.-J."/>
            <person name="Di Pietro A."/>
            <person name="Dufresne M."/>
            <person name="Freitag M."/>
            <person name="Grabherr M."/>
            <person name="Henrissat B."/>
            <person name="Houterman P.M."/>
            <person name="Kang S."/>
            <person name="Shim W.-B."/>
            <person name="Woloshuk C."/>
            <person name="Xie X."/>
            <person name="Xu J.-R."/>
            <person name="Antoniw J."/>
            <person name="Baker S.E."/>
            <person name="Bluhm B.H."/>
            <person name="Breakspear A."/>
            <person name="Brown D.W."/>
            <person name="Butchko R.A.E."/>
            <person name="Chapman S."/>
            <person name="Coulson R."/>
            <person name="Coutinho P.M."/>
            <person name="Danchin E.G.J."/>
            <person name="Diener A."/>
            <person name="Gale L.R."/>
            <person name="Gardiner D.M."/>
            <person name="Goff S."/>
            <person name="Hammond-Kosack K.E."/>
            <person name="Hilburn K."/>
            <person name="Hua-Van A."/>
            <person name="Jonkers W."/>
            <person name="Kazan K."/>
            <person name="Kodira C.D."/>
            <person name="Koehrsen M."/>
            <person name="Kumar L."/>
            <person name="Lee Y.-H."/>
            <person name="Li L."/>
            <person name="Manners J.M."/>
            <person name="Miranda-Saavedra D."/>
            <person name="Mukherjee M."/>
            <person name="Park G."/>
            <person name="Park J."/>
            <person name="Park S.-Y."/>
            <person name="Proctor R.H."/>
            <person name="Regev A."/>
            <person name="Ruiz-Roldan M.C."/>
            <person name="Sain D."/>
            <person name="Sakthikumar S."/>
            <person name="Sykes S."/>
            <person name="Schwartz D.C."/>
            <person name="Turgeon B.G."/>
            <person name="Wapinski I."/>
            <person name="Yoder O."/>
            <person name="Young S."/>
            <person name="Zeng Q."/>
            <person name="Zhou S."/>
            <person name="Galagan J."/>
            <person name="Cuomo C.A."/>
            <person name="Kistler H.C."/>
            <person name="Rep M."/>
        </authorList>
    </citation>
    <scope>GENOME REANNOTATION</scope>
    <source>
        <strain>ATCC MYA-4620 / CBS 123657 / FGSC 9075 / NRRL 31084 / PH-1</strain>
    </source>
</reference>
<reference key="3">
    <citation type="journal article" date="2015" name="BMC Genomics">
        <title>The completed genome sequence of the pathogenic ascomycete fungus Fusarium graminearum.</title>
        <authorList>
            <person name="King R."/>
            <person name="Urban M."/>
            <person name="Hammond-Kosack M.C.U."/>
            <person name="Hassani-Pak K."/>
            <person name="Hammond-Kosack K.E."/>
        </authorList>
    </citation>
    <scope>NUCLEOTIDE SEQUENCE [LARGE SCALE GENOMIC DNA]</scope>
    <source>
        <strain>ATCC MYA-4620 / CBS 123657 / FGSC 9075 / NRRL 31084 / PH-1</strain>
    </source>
</reference>
<gene>
    <name evidence="1" type="primary">SPB4</name>
    <name type="ORF">FGRRES_10896</name>
    <name type="ORF">FGSG_10896</name>
</gene>
<keyword id="KW-0067">ATP-binding</keyword>
<keyword id="KW-0175">Coiled coil</keyword>
<keyword id="KW-0347">Helicase</keyword>
<keyword id="KW-0378">Hydrolase</keyword>
<keyword id="KW-0547">Nucleotide-binding</keyword>
<keyword id="KW-0539">Nucleus</keyword>
<keyword id="KW-1185">Reference proteome</keyword>
<keyword id="KW-0690">Ribosome biogenesis</keyword>
<keyword id="KW-0694">RNA-binding</keyword>
<keyword id="KW-0698">rRNA processing</keyword>
<organism>
    <name type="scientific">Gibberella zeae (strain ATCC MYA-4620 / CBS 123657 / FGSC 9075 / NRRL 31084 / PH-1)</name>
    <name type="common">Wheat head blight fungus</name>
    <name type="synonym">Fusarium graminearum</name>
    <dbReference type="NCBI Taxonomy" id="229533"/>
    <lineage>
        <taxon>Eukaryota</taxon>
        <taxon>Fungi</taxon>
        <taxon>Dikarya</taxon>
        <taxon>Ascomycota</taxon>
        <taxon>Pezizomycotina</taxon>
        <taxon>Sordariomycetes</taxon>
        <taxon>Hypocreomycetidae</taxon>
        <taxon>Hypocreales</taxon>
        <taxon>Nectriaceae</taxon>
        <taxon>Fusarium</taxon>
    </lineage>
</organism>
<sequence>MATEKPKKRSPRAWDTLNPPLSEWIRDAVATMGFDQMTPVQAATLPHFMGNKDVVVEAVTGSGKTLAFLIPLVQKLLRLSEPTKKHHVAAIIVSPTRELAAQIHTVLMKLLQFHEASAEILPHLKDDDEKRPFTTVPAIVPQLLVGGTTTTVQDLRFFLRHSPNVLISSPGRLVELMSSPHVHCPQSSFEVLVLDEADRLLDLGFKPDLQKILSHLPKQRRTGLFSASVSEAVGEIIRVGLRNPVKIEVKVKIKGGGILEDRKTPASLQMTYMVKPASQKLPALAELLRQLPVRPQRSIVFLSTCAAVDYFQHILPLILPEGFALVPLHGKHAAKVREKNFNKFLSSVSPTILLTTDLAARGLDIPQVDLVVQIDAPSDPKVFIHRSGRAGRAGRKGLAVVMLHPGREEDYVQFLEIRKTPIAPLEKPTITTSEDDAAEFAKKTRDFVLTDRGLFDKAQKAFVSWARSYGAHQATSIFRAADLDWADLGNAWGLLRMPRMPELKGWTGDKMCGLEIDWDNYAYKEKTREQQRKVALEEEKSGVKKQDKSEEFKRKRKNNEAWSAKHEKEDDRVERREKRRKRRDAEATSKMTDDEKVKQMELNDLIAEVRRQNREKAAAEAAAAKQEKDGEFKGFDD</sequence>
<name>SPB4_GIBZE</name>
<protein>
    <recommendedName>
        <fullName evidence="6">ATP-dependent rRNA helicase SPB4</fullName>
        <ecNumber evidence="1">3.6.4.13</ecNumber>
    </recommendedName>
</protein>